<proteinExistence type="inferred from homology"/>
<keyword id="KW-0067">ATP-binding</keyword>
<keyword id="KW-0143">Chaperone</keyword>
<keyword id="KW-0963">Cytoplasm</keyword>
<keyword id="KW-0413">Isomerase</keyword>
<keyword id="KW-0547">Nucleotide-binding</keyword>
<keyword id="KW-1185">Reference proteome</keyword>
<accession>A5EET6</accession>
<feature type="chain" id="PRO_0000331975" description="Chaperonin GroEL 2">
    <location>
        <begin position="1"/>
        <end position="541"/>
    </location>
</feature>
<feature type="binding site" evidence="1">
    <location>
        <begin position="30"/>
        <end position="33"/>
    </location>
    <ligand>
        <name>ATP</name>
        <dbReference type="ChEBI" id="CHEBI:30616"/>
    </ligand>
</feature>
<feature type="binding site" evidence="1">
    <location>
        <position position="51"/>
    </location>
    <ligand>
        <name>ATP</name>
        <dbReference type="ChEBI" id="CHEBI:30616"/>
    </ligand>
</feature>
<feature type="binding site" evidence="1">
    <location>
        <begin position="87"/>
        <end position="91"/>
    </location>
    <ligand>
        <name>ATP</name>
        <dbReference type="ChEBI" id="CHEBI:30616"/>
    </ligand>
</feature>
<feature type="binding site" evidence="1">
    <location>
        <position position="415"/>
    </location>
    <ligand>
        <name>ATP</name>
        <dbReference type="ChEBI" id="CHEBI:30616"/>
    </ligand>
</feature>
<feature type="binding site" evidence="1">
    <location>
        <position position="496"/>
    </location>
    <ligand>
        <name>ATP</name>
        <dbReference type="ChEBI" id="CHEBI:30616"/>
    </ligand>
</feature>
<organism>
    <name type="scientific">Bradyrhizobium sp. (strain BTAi1 / ATCC BAA-1182)</name>
    <dbReference type="NCBI Taxonomy" id="288000"/>
    <lineage>
        <taxon>Bacteria</taxon>
        <taxon>Pseudomonadati</taxon>
        <taxon>Pseudomonadota</taxon>
        <taxon>Alphaproteobacteria</taxon>
        <taxon>Hyphomicrobiales</taxon>
        <taxon>Nitrobacteraceae</taxon>
        <taxon>Bradyrhizobium</taxon>
    </lineage>
</organism>
<protein>
    <recommendedName>
        <fullName evidence="1">Chaperonin GroEL 2</fullName>
        <ecNumber evidence="1">5.6.1.7</ecNumber>
    </recommendedName>
    <alternativeName>
        <fullName evidence="1">60 kDa chaperonin 2</fullName>
    </alternativeName>
    <alternativeName>
        <fullName evidence="1">Chaperonin-60 2</fullName>
        <shortName evidence="1">Cpn60 2</shortName>
    </alternativeName>
</protein>
<evidence type="ECO:0000255" key="1">
    <source>
        <dbReference type="HAMAP-Rule" id="MF_00600"/>
    </source>
</evidence>
<gene>
    <name evidence="1" type="primary">groEL2</name>
    <name evidence="1" type="synonym">groL2</name>
    <name type="ordered locus">BBta_2521</name>
</gene>
<dbReference type="EC" id="5.6.1.7" evidence="1"/>
<dbReference type="EMBL" id="CP000494">
    <property type="protein sequence ID" value="ABQ34680.1"/>
    <property type="molecule type" value="Genomic_DNA"/>
</dbReference>
<dbReference type="RefSeq" id="WP_012042708.1">
    <property type="nucleotide sequence ID" value="NC_009485.1"/>
</dbReference>
<dbReference type="SMR" id="A5EET6"/>
<dbReference type="STRING" id="288000.BBta_2521"/>
<dbReference type="KEGG" id="bbt:BBta_2521"/>
<dbReference type="eggNOG" id="COG0459">
    <property type="taxonomic scope" value="Bacteria"/>
</dbReference>
<dbReference type="HOGENOM" id="CLU_016503_3_0_5"/>
<dbReference type="OrthoDB" id="9766614at2"/>
<dbReference type="Proteomes" id="UP000000246">
    <property type="component" value="Chromosome"/>
</dbReference>
<dbReference type="GO" id="GO:0005737">
    <property type="term" value="C:cytoplasm"/>
    <property type="evidence" value="ECO:0007669"/>
    <property type="project" value="UniProtKB-SubCell"/>
</dbReference>
<dbReference type="GO" id="GO:0005524">
    <property type="term" value="F:ATP binding"/>
    <property type="evidence" value="ECO:0007669"/>
    <property type="project" value="UniProtKB-UniRule"/>
</dbReference>
<dbReference type="GO" id="GO:0140662">
    <property type="term" value="F:ATP-dependent protein folding chaperone"/>
    <property type="evidence" value="ECO:0007669"/>
    <property type="project" value="InterPro"/>
</dbReference>
<dbReference type="GO" id="GO:0016853">
    <property type="term" value="F:isomerase activity"/>
    <property type="evidence" value="ECO:0007669"/>
    <property type="project" value="UniProtKB-KW"/>
</dbReference>
<dbReference type="GO" id="GO:0051082">
    <property type="term" value="F:unfolded protein binding"/>
    <property type="evidence" value="ECO:0007669"/>
    <property type="project" value="UniProtKB-UniRule"/>
</dbReference>
<dbReference type="GO" id="GO:0042026">
    <property type="term" value="P:protein refolding"/>
    <property type="evidence" value="ECO:0007669"/>
    <property type="project" value="UniProtKB-UniRule"/>
</dbReference>
<dbReference type="CDD" id="cd03344">
    <property type="entry name" value="GroEL"/>
    <property type="match status" value="1"/>
</dbReference>
<dbReference type="FunFam" id="3.50.7.10:FF:000001">
    <property type="entry name" value="60 kDa chaperonin"/>
    <property type="match status" value="1"/>
</dbReference>
<dbReference type="Gene3D" id="3.50.7.10">
    <property type="entry name" value="GroEL"/>
    <property type="match status" value="1"/>
</dbReference>
<dbReference type="Gene3D" id="1.10.560.10">
    <property type="entry name" value="GroEL-like equatorial domain"/>
    <property type="match status" value="1"/>
</dbReference>
<dbReference type="Gene3D" id="3.30.260.10">
    <property type="entry name" value="TCP-1-like chaperonin intermediate domain"/>
    <property type="match status" value="1"/>
</dbReference>
<dbReference type="HAMAP" id="MF_00600">
    <property type="entry name" value="CH60"/>
    <property type="match status" value="1"/>
</dbReference>
<dbReference type="InterPro" id="IPR001844">
    <property type="entry name" value="Cpn60/GroEL"/>
</dbReference>
<dbReference type="InterPro" id="IPR002423">
    <property type="entry name" value="Cpn60/GroEL/TCP-1"/>
</dbReference>
<dbReference type="InterPro" id="IPR027409">
    <property type="entry name" value="GroEL-like_apical_dom_sf"/>
</dbReference>
<dbReference type="InterPro" id="IPR027413">
    <property type="entry name" value="GROEL-like_equatorial_sf"/>
</dbReference>
<dbReference type="InterPro" id="IPR027410">
    <property type="entry name" value="TCP-1-like_intermed_sf"/>
</dbReference>
<dbReference type="NCBIfam" id="TIGR02348">
    <property type="entry name" value="GroEL"/>
    <property type="match status" value="1"/>
</dbReference>
<dbReference type="NCBIfam" id="NF000592">
    <property type="entry name" value="PRK00013.1"/>
    <property type="match status" value="1"/>
</dbReference>
<dbReference type="NCBIfam" id="NF009487">
    <property type="entry name" value="PRK12849.1"/>
    <property type="match status" value="1"/>
</dbReference>
<dbReference type="NCBIfam" id="NF009488">
    <property type="entry name" value="PRK12850.1"/>
    <property type="match status" value="1"/>
</dbReference>
<dbReference type="NCBIfam" id="NF009489">
    <property type="entry name" value="PRK12851.1"/>
    <property type="match status" value="1"/>
</dbReference>
<dbReference type="PANTHER" id="PTHR45633">
    <property type="entry name" value="60 KDA HEAT SHOCK PROTEIN, MITOCHONDRIAL"/>
    <property type="match status" value="1"/>
</dbReference>
<dbReference type="Pfam" id="PF00118">
    <property type="entry name" value="Cpn60_TCP1"/>
    <property type="match status" value="1"/>
</dbReference>
<dbReference type="PRINTS" id="PR00298">
    <property type="entry name" value="CHAPERONIN60"/>
</dbReference>
<dbReference type="SUPFAM" id="SSF52029">
    <property type="entry name" value="GroEL apical domain-like"/>
    <property type="match status" value="1"/>
</dbReference>
<dbReference type="SUPFAM" id="SSF48592">
    <property type="entry name" value="GroEL equatorial domain-like"/>
    <property type="match status" value="1"/>
</dbReference>
<dbReference type="SUPFAM" id="SSF54849">
    <property type="entry name" value="GroEL-intermediate domain like"/>
    <property type="match status" value="1"/>
</dbReference>
<name>CH602_BRASB</name>
<sequence>MSAKDVKFAADARERLIRGVDILANAVKVTLGPKGRNVLIEKSFGAPRITKDGVTVAKEIELEDKYENLGAQLLRQVASKTNDLAGDGTTTATVLAQAIVREGAKAVAASLNPLDLKRGIDLAVAEAIKDIEKRARKVQSSEEVAQVGTISANSDAAVGKIIATAVKKVGNDGVITVEEAKSLETELDVVEGLQFDRGYLSPYFVTNSDKLLVEFEEPYILIHESKLTSLQPLLPVLEAVVQTGRPLLVIAEDVEGEALATLVVNKLRGGLKVAAVKAPGFGDRRKAQLEDIAILTGGQTISQDLGIKLENVTLSQLGRARRIRIDKENTTVVGGTGKKKDIDARIAQIRAQIEETTSDYDREKLQERLAKLSGGVAVIRVGGATEVEVKEKKDRVDDALNATRAAIAEGIVPGGGVALLRAKAAVSKLTNPNPDIQAGIQIVLKALEAPIRQIADNAGVEGSIVVGKILENRSPTFGFDAQKEEYVDLIEAGIVDPAKVVRTALQDAASVAALIVTTEALVVELPKEKAALPAAGAGADF</sequence>
<reference key="1">
    <citation type="journal article" date="2007" name="Science">
        <title>Legumes symbioses: absence of nod genes in photosynthetic bradyrhizobia.</title>
        <authorList>
            <person name="Giraud E."/>
            <person name="Moulin L."/>
            <person name="Vallenet D."/>
            <person name="Barbe V."/>
            <person name="Cytryn E."/>
            <person name="Avarre J.-C."/>
            <person name="Jaubert M."/>
            <person name="Simon D."/>
            <person name="Cartieaux F."/>
            <person name="Prin Y."/>
            <person name="Bena G."/>
            <person name="Hannibal L."/>
            <person name="Fardoux J."/>
            <person name="Kojadinovic M."/>
            <person name="Vuillet L."/>
            <person name="Lajus A."/>
            <person name="Cruveiller S."/>
            <person name="Rouy Z."/>
            <person name="Mangenot S."/>
            <person name="Segurens B."/>
            <person name="Dossat C."/>
            <person name="Franck W.L."/>
            <person name="Chang W.-S."/>
            <person name="Saunders E."/>
            <person name="Bruce D."/>
            <person name="Richardson P."/>
            <person name="Normand P."/>
            <person name="Dreyfus B."/>
            <person name="Pignol D."/>
            <person name="Stacey G."/>
            <person name="Emerich D."/>
            <person name="Vermeglio A."/>
            <person name="Medigue C."/>
            <person name="Sadowsky M."/>
        </authorList>
    </citation>
    <scope>NUCLEOTIDE SEQUENCE [LARGE SCALE GENOMIC DNA]</scope>
    <source>
        <strain>BTAi1 / ATCC BAA-1182</strain>
    </source>
</reference>
<comment type="function">
    <text evidence="1">Together with its co-chaperonin GroES, plays an essential role in assisting protein folding. The GroEL-GroES system forms a nano-cage that allows encapsulation of the non-native substrate proteins and provides a physical environment optimized to promote and accelerate protein folding.</text>
</comment>
<comment type="catalytic activity">
    <reaction evidence="1">
        <text>ATP + H2O + a folded polypeptide = ADP + phosphate + an unfolded polypeptide.</text>
        <dbReference type="EC" id="5.6.1.7"/>
    </reaction>
</comment>
<comment type="subunit">
    <text evidence="1">Forms a cylinder of 14 subunits composed of two heptameric rings stacked back-to-back. Interacts with the co-chaperonin GroES.</text>
</comment>
<comment type="subcellular location">
    <subcellularLocation>
        <location evidence="1">Cytoplasm</location>
    </subcellularLocation>
</comment>
<comment type="similarity">
    <text evidence="1">Belongs to the chaperonin (HSP60) family.</text>
</comment>